<comment type="similarity">
    <text evidence="1">Belongs to the TIP41 family.</text>
</comment>
<gene>
    <name type="ORF">C02C2.6</name>
    <name type="ORF">ZK688.9</name>
</gene>
<feature type="chain" id="PRO_0000065105" description="TIP41-like protein">
    <location>
        <begin position="1"/>
        <end position="281"/>
    </location>
</feature>
<proteinExistence type="inferred from homology"/>
<evidence type="ECO:0000305" key="1"/>
<organism>
    <name type="scientific">Caenorhabditis elegans</name>
    <dbReference type="NCBI Taxonomy" id="6239"/>
    <lineage>
        <taxon>Eukaryota</taxon>
        <taxon>Metazoa</taxon>
        <taxon>Ecdysozoa</taxon>
        <taxon>Nematoda</taxon>
        <taxon>Chromadorea</taxon>
        <taxon>Rhabditida</taxon>
        <taxon>Rhabditina</taxon>
        <taxon>Rhabditomorpha</taxon>
        <taxon>Rhabditoidea</taxon>
        <taxon>Rhabditidae</taxon>
        <taxon>Peloderinae</taxon>
        <taxon>Caenorhabditis</taxon>
    </lineage>
</organism>
<name>TIPRL_CAEEL</name>
<dbReference type="EMBL" id="FO080277">
    <property type="protein sequence ID" value="CCD62545.1"/>
    <property type="molecule type" value="Genomic_DNA"/>
</dbReference>
<dbReference type="PIR" id="S44737">
    <property type="entry name" value="S44737"/>
</dbReference>
<dbReference type="RefSeq" id="NP_498713.3">
    <property type="nucleotide sequence ID" value="NM_066312.5"/>
</dbReference>
<dbReference type="SMR" id="P34274"/>
<dbReference type="BioGRID" id="41314">
    <property type="interactions" value="1"/>
</dbReference>
<dbReference type="FunCoup" id="P34274">
    <property type="interactions" value="2690"/>
</dbReference>
<dbReference type="IntAct" id="P34274">
    <property type="interactions" value="1"/>
</dbReference>
<dbReference type="STRING" id="6239.ZK688.9.1"/>
<dbReference type="iPTMnet" id="P34274"/>
<dbReference type="PaxDb" id="6239-ZK688.9"/>
<dbReference type="PeptideAtlas" id="P34274"/>
<dbReference type="EnsemblMetazoa" id="ZK688.9.1">
    <property type="protein sequence ID" value="ZK688.9.1"/>
    <property type="gene ID" value="WBGene00022803"/>
</dbReference>
<dbReference type="GeneID" id="176106"/>
<dbReference type="KEGG" id="cel:CELE_ZK688.9"/>
<dbReference type="UCSC" id="ZK688.9">
    <property type="organism name" value="c. elegans"/>
</dbReference>
<dbReference type="AGR" id="WB:WBGene00022803"/>
<dbReference type="CTD" id="176106"/>
<dbReference type="WormBase" id="ZK688.9">
    <property type="protein sequence ID" value="CE40006"/>
    <property type="gene ID" value="WBGene00022803"/>
</dbReference>
<dbReference type="eggNOG" id="KOG3224">
    <property type="taxonomic scope" value="Eukaryota"/>
</dbReference>
<dbReference type="GeneTree" id="ENSGT00390000006659"/>
<dbReference type="HOGENOM" id="CLU_039187_2_0_1"/>
<dbReference type="InParanoid" id="P34274"/>
<dbReference type="OMA" id="QPFDWTY"/>
<dbReference type="OrthoDB" id="10253878at2759"/>
<dbReference type="PhylomeDB" id="P34274"/>
<dbReference type="PRO" id="PR:P34274"/>
<dbReference type="Proteomes" id="UP000001940">
    <property type="component" value="Chromosome III"/>
</dbReference>
<dbReference type="Bgee" id="WBGene00022803">
    <property type="expression patterns" value="Expressed in germ line (C elegans) and 4 other cell types or tissues"/>
</dbReference>
<dbReference type="GO" id="GO:0005829">
    <property type="term" value="C:cytosol"/>
    <property type="evidence" value="ECO:0000318"/>
    <property type="project" value="GO_Central"/>
</dbReference>
<dbReference type="GO" id="GO:0072542">
    <property type="term" value="F:protein phosphatase activator activity"/>
    <property type="evidence" value="ECO:0000318"/>
    <property type="project" value="GO_Central"/>
</dbReference>
<dbReference type="GO" id="GO:0031929">
    <property type="term" value="P:TOR signaling"/>
    <property type="evidence" value="ECO:0000318"/>
    <property type="project" value="GO_Central"/>
</dbReference>
<dbReference type="InterPro" id="IPR051330">
    <property type="entry name" value="Phosphatase_reg/MetRdx"/>
</dbReference>
<dbReference type="InterPro" id="IPR007303">
    <property type="entry name" value="TIP41-like"/>
</dbReference>
<dbReference type="PANTHER" id="PTHR21021">
    <property type="entry name" value="GAF/PUTATIVE CYTOSKELETAL PROTEIN"/>
    <property type="match status" value="1"/>
</dbReference>
<dbReference type="PANTHER" id="PTHR21021:SF16">
    <property type="entry name" value="TIP41-LIKE PROTEIN"/>
    <property type="match status" value="1"/>
</dbReference>
<dbReference type="Pfam" id="PF04176">
    <property type="entry name" value="TIP41"/>
    <property type="match status" value="1"/>
</dbReference>
<protein>
    <recommendedName>
        <fullName>TIP41-like protein</fullName>
    </recommendedName>
</protein>
<sequence length="281" mass="32909">MSDRRSIDEVMVRAAKNAKREEKFDLGFFKFISLAGHILESSCKHSEDQEDPSCLKCKYDRELKLEERPEMVFARNSLTIQFGRLGSIEFNALDALKMVCADRLPDVKVGASTVWQSARQDRIQQISEHQKPFDWTYTTHYKGTVTGCQVTPTTERIDMERLKRRDEILFSSSITLFEDELADHGIAQLLARVRVMRGYFFVLLRFYMRVDNVLLRVCDTRIVGNEFDGHVIREWQLREAKYGNLGHVDPEELLDVDRAWMHLPVVEEHFDRVSVDRERLF</sequence>
<reference key="1">
    <citation type="journal article" date="1994" name="Nature">
        <title>2.2 Mb of contiguous nucleotide sequence from chromosome III of C. elegans.</title>
        <authorList>
            <person name="Wilson R."/>
            <person name="Ainscough R."/>
            <person name="Anderson K."/>
            <person name="Baynes C."/>
            <person name="Berks M."/>
            <person name="Bonfield J."/>
            <person name="Burton J."/>
            <person name="Connell M."/>
            <person name="Copsey T."/>
            <person name="Cooper J."/>
            <person name="Coulson A."/>
            <person name="Craxton M."/>
            <person name="Dear S."/>
            <person name="Du Z."/>
            <person name="Durbin R."/>
            <person name="Favello A."/>
            <person name="Fraser A."/>
            <person name="Fulton L."/>
            <person name="Gardner A."/>
            <person name="Green P."/>
            <person name="Hawkins T."/>
            <person name="Hillier L."/>
            <person name="Jier M."/>
            <person name="Johnston L."/>
            <person name="Jones M."/>
            <person name="Kershaw J."/>
            <person name="Kirsten J."/>
            <person name="Laisster N."/>
            <person name="Latreille P."/>
            <person name="Lightning J."/>
            <person name="Lloyd C."/>
            <person name="Mortimore B."/>
            <person name="O'Callaghan M."/>
            <person name="Parsons J."/>
            <person name="Percy C."/>
            <person name="Rifken L."/>
            <person name="Roopra A."/>
            <person name="Saunders D."/>
            <person name="Shownkeen R."/>
            <person name="Sims M."/>
            <person name="Smaldon N."/>
            <person name="Smith A."/>
            <person name="Smith M."/>
            <person name="Sonnhammer E."/>
            <person name="Staden R."/>
            <person name="Sulston J."/>
            <person name="Thierry-Mieg J."/>
            <person name="Thomas K."/>
            <person name="Vaudin M."/>
            <person name="Vaughan K."/>
            <person name="Waterston R."/>
            <person name="Watson A."/>
            <person name="Weinstock L."/>
            <person name="Wilkinson-Sproat J."/>
            <person name="Wohldman P."/>
        </authorList>
    </citation>
    <scope>NUCLEOTIDE SEQUENCE [LARGE SCALE GENOMIC DNA]</scope>
    <source>
        <strain>Bristol N2</strain>
    </source>
</reference>
<reference key="2">
    <citation type="journal article" date="1998" name="Science">
        <title>Genome sequence of the nematode C. elegans: a platform for investigating biology.</title>
        <authorList>
            <consortium name="The C. elegans sequencing consortium"/>
        </authorList>
    </citation>
    <scope>NUCLEOTIDE SEQUENCE [LARGE SCALE GENOMIC DNA]</scope>
    <source>
        <strain>Bristol N2</strain>
    </source>
</reference>
<keyword id="KW-1185">Reference proteome</keyword>
<accession>P34274</accession>
<accession>Q27GV5</accession>
<accession>Q95PW4</accession>